<reference key="1">
    <citation type="journal article" date="2007" name="J. Bacteriol.">
        <title>Genome of the opportunistic pathogen Streptococcus sanguinis.</title>
        <authorList>
            <person name="Xu P."/>
            <person name="Alves J.M."/>
            <person name="Kitten T."/>
            <person name="Brown A."/>
            <person name="Chen Z."/>
            <person name="Ozaki L.S."/>
            <person name="Manque P."/>
            <person name="Ge X."/>
            <person name="Serrano M.G."/>
            <person name="Puiu D."/>
            <person name="Hendricks S."/>
            <person name="Wang Y."/>
            <person name="Chaplin M.D."/>
            <person name="Akan D."/>
            <person name="Paik S."/>
            <person name="Peterson D.L."/>
            <person name="Macrina F.L."/>
            <person name="Buck G.A."/>
        </authorList>
    </citation>
    <scope>NUCLEOTIDE SEQUENCE [LARGE SCALE GENOMIC DNA]</scope>
    <source>
        <strain>SK36</strain>
    </source>
</reference>
<sequence>MKLPKEGDFITIQSYKHDGNLHRTWRDTMVLKTTENAIIGVNDHTLVTESDGRRWVTREPAIVYFHKKYWFNIIAMIRDNGTSYYCNLASPYYLDNEALKYIDYDLDVKVFADGEKRLLDVEEYERHKKQMHYSDDLDFILKENVKILVDWINNGRGPFSDAYVNIWYKRYVELKNR</sequence>
<proteinExistence type="inferred from homology"/>
<dbReference type="EC" id="3.6.1.15" evidence="1"/>
<dbReference type="EC" id="3.6.1.6" evidence="1"/>
<dbReference type="EMBL" id="CP000387">
    <property type="protein sequence ID" value="ABN45214.1"/>
    <property type="molecule type" value="Genomic_DNA"/>
</dbReference>
<dbReference type="RefSeq" id="WP_002896978.1">
    <property type="nucleotide sequence ID" value="NC_009009.1"/>
</dbReference>
<dbReference type="RefSeq" id="YP_001035764.1">
    <property type="nucleotide sequence ID" value="NC_009009.1"/>
</dbReference>
<dbReference type="SMR" id="A3CPV9"/>
<dbReference type="STRING" id="388919.SSA_1832"/>
<dbReference type="KEGG" id="ssa:SSA_1832"/>
<dbReference type="PATRIC" id="fig|388919.9.peg.1738"/>
<dbReference type="eggNOG" id="COG3557">
    <property type="taxonomic scope" value="Bacteria"/>
</dbReference>
<dbReference type="HOGENOM" id="CLU_109787_1_0_9"/>
<dbReference type="OrthoDB" id="1645325at2"/>
<dbReference type="Proteomes" id="UP000002148">
    <property type="component" value="Chromosome"/>
</dbReference>
<dbReference type="GO" id="GO:0000287">
    <property type="term" value="F:magnesium ion binding"/>
    <property type="evidence" value="ECO:0007669"/>
    <property type="project" value="UniProtKB-UniRule"/>
</dbReference>
<dbReference type="GO" id="GO:0017110">
    <property type="term" value="F:nucleoside diphosphate phosphatase activity"/>
    <property type="evidence" value="ECO:0007669"/>
    <property type="project" value="UniProtKB-UniRule"/>
</dbReference>
<dbReference type="GO" id="GO:0017111">
    <property type="term" value="F:ribonucleoside triphosphate phosphatase activity"/>
    <property type="evidence" value="ECO:0007669"/>
    <property type="project" value="UniProtKB-UniRule"/>
</dbReference>
<dbReference type="Gene3D" id="2.40.380.10">
    <property type="entry name" value="FomD-like"/>
    <property type="match status" value="1"/>
</dbReference>
<dbReference type="HAMAP" id="MF_01568">
    <property type="entry name" value="Ntdp"/>
    <property type="match status" value="1"/>
</dbReference>
<dbReference type="InterPro" id="IPR007295">
    <property type="entry name" value="DUF402"/>
</dbReference>
<dbReference type="InterPro" id="IPR035930">
    <property type="entry name" value="FomD-like_sf"/>
</dbReference>
<dbReference type="InterPro" id="IPR050212">
    <property type="entry name" value="Ntdp-like"/>
</dbReference>
<dbReference type="InterPro" id="IPR016882">
    <property type="entry name" value="SA1684"/>
</dbReference>
<dbReference type="NCBIfam" id="NF010183">
    <property type="entry name" value="PRK13662.1"/>
    <property type="match status" value="1"/>
</dbReference>
<dbReference type="PANTHER" id="PTHR39159">
    <property type="match status" value="1"/>
</dbReference>
<dbReference type="PANTHER" id="PTHR39159:SF1">
    <property type="entry name" value="UPF0374 PROTEIN YGAC"/>
    <property type="match status" value="1"/>
</dbReference>
<dbReference type="Pfam" id="PF04167">
    <property type="entry name" value="DUF402"/>
    <property type="match status" value="1"/>
</dbReference>
<dbReference type="PIRSF" id="PIRSF028345">
    <property type="entry name" value="UCP028345"/>
    <property type="match status" value="1"/>
</dbReference>
<dbReference type="SUPFAM" id="SSF159234">
    <property type="entry name" value="FomD-like"/>
    <property type="match status" value="1"/>
</dbReference>
<organism>
    <name type="scientific">Streptococcus sanguinis (strain SK36)</name>
    <dbReference type="NCBI Taxonomy" id="388919"/>
    <lineage>
        <taxon>Bacteria</taxon>
        <taxon>Bacillati</taxon>
        <taxon>Bacillota</taxon>
        <taxon>Bacilli</taxon>
        <taxon>Lactobacillales</taxon>
        <taxon>Streptococcaceae</taxon>
        <taxon>Streptococcus</taxon>
    </lineage>
</organism>
<name>NTDP_STRSV</name>
<accession>A3CPV9</accession>
<gene>
    <name type="ordered locus">SSA_1832</name>
</gene>
<protein>
    <recommendedName>
        <fullName evidence="1">Nucleoside triphosphate/diphosphate phosphatase</fullName>
        <ecNumber evidence="1">3.6.1.15</ecNumber>
        <ecNumber evidence="1">3.6.1.6</ecNumber>
    </recommendedName>
</protein>
<evidence type="ECO:0000255" key="1">
    <source>
        <dbReference type="HAMAP-Rule" id="MF_01568"/>
    </source>
</evidence>
<comment type="function">
    <text evidence="1">Has nucleoside phosphatase activity towards nucleoside triphosphates and nucleoside diphosphates.</text>
</comment>
<comment type="catalytic activity">
    <reaction evidence="1">
        <text>a ribonucleoside 5'-triphosphate + H2O = a ribonucleoside 5'-diphosphate + phosphate + H(+)</text>
        <dbReference type="Rhea" id="RHEA:23680"/>
        <dbReference type="ChEBI" id="CHEBI:15377"/>
        <dbReference type="ChEBI" id="CHEBI:15378"/>
        <dbReference type="ChEBI" id="CHEBI:43474"/>
        <dbReference type="ChEBI" id="CHEBI:57930"/>
        <dbReference type="ChEBI" id="CHEBI:61557"/>
        <dbReference type="EC" id="3.6.1.15"/>
    </reaction>
</comment>
<comment type="catalytic activity">
    <reaction evidence="1">
        <text>a ribonucleoside 5'-diphosphate + H2O = a ribonucleoside 5'-phosphate + phosphate + H(+)</text>
        <dbReference type="Rhea" id="RHEA:36799"/>
        <dbReference type="ChEBI" id="CHEBI:15377"/>
        <dbReference type="ChEBI" id="CHEBI:15378"/>
        <dbReference type="ChEBI" id="CHEBI:43474"/>
        <dbReference type="ChEBI" id="CHEBI:57930"/>
        <dbReference type="ChEBI" id="CHEBI:58043"/>
        <dbReference type="EC" id="3.6.1.6"/>
    </reaction>
</comment>
<comment type="cofactor">
    <cofactor evidence="1">
        <name>Mg(2+)</name>
        <dbReference type="ChEBI" id="CHEBI:18420"/>
    </cofactor>
</comment>
<comment type="similarity">
    <text evidence="1">Belongs to the Ntdp family.</text>
</comment>
<keyword id="KW-0378">Hydrolase</keyword>
<keyword id="KW-0460">Magnesium</keyword>
<keyword id="KW-0479">Metal-binding</keyword>
<keyword id="KW-1185">Reference proteome</keyword>
<feature type="chain" id="PRO_1000069112" description="Nucleoside triphosphate/diphosphate phosphatase">
    <location>
        <begin position="1"/>
        <end position="177"/>
    </location>
</feature>
<feature type="active site" description="Proton donor" evidence="1">
    <location>
        <position position="23"/>
    </location>
</feature>
<feature type="binding site" evidence="1">
    <location>
        <position position="87"/>
    </location>
    <ligand>
        <name>Mg(2+)</name>
        <dbReference type="ChEBI" id="CHEBI:18420"/>
        <label>1</label>
    </ligand>
</feature>
<feature type="binding site" evidence="1">
    <location>
        <position position="103"/>
    </location>
    <ligand>
        <name>Mg(2+)</name>
        <dbReference type="ChEBI" id="CHEBI:18420"/>
        <label>1</label>
    </ligand>
</feature>
<feature type="binding site" evidence="1">
    <location>
        <position position="105"/>
    </location>
    <ligand>
        <name>Mg(2+)</name>
        <dbReference type="ChEBI" id="CHEBI:18420"/>
        <label>2</label>
    </ligand>
</feature>
<feature type="binding site" evidence="1">
    <location>
        <position position="107"/>
    </location>
    <ligand>
        <name>Mg(2+)</name>
        <dbReference type="ChEBI" id="CHEBI:18420"/>
        <label>1</label>
    </ligand>
</feature>
<feature type="binding site" evidence="1">
    <location>
        <position position="107"/>
    </location>
    <ligand>
        <name>Mg(2+)</name>
        <dbReference type="ChEBI" id="CHEBI:18420"/>
        <label>2</label>
    </ligand>
</feature>
<feature type="binding site" evidence="1">
    <location>
        <position position="120"/>
    </location>
    <ligand>
        <name>Mg(2+)</name>
        <dbReference type="ChEBI" id="CHEBI:18420"/>
        <label>2</label>
    </ligand>
</feature>
<feature type="binding site" evidence="1">
    <location>
        <position position="123"/>
    </location>
    <ligand>
        <name>Mg(2+)</name>
        <dbReference type="ChEBI" id="CHEBI:18420"/>
        <label>2</label>
    </ligand>
</feature>